<feature type="chain" id="PRO_0000133491" description="Major capsid protein L1">
    <location>
        <begin position="1"/>
        <end position="505"/>
    </location>
</feature>
<feature type="region of interest" description="Disordered" evidence="2">
    <location>
        <begin position="474"/>
        <end position="505"/>
    </location>
</feature>
<feature type="compositionally biased region" description="Low complexity" evidence="2">
    <location>
        <begin position="486"/>
        <end position="497"/>
    </location>
</feature>
<feature type="disulfide bond" description="Interchain (with C-427)" evidence="1">
    <location>
        <position position="173"/>
    </location>
</feature>
<feature type="disulfide bond" description="Interchain (with C-173)" evidence="1">
    <location>
        <position position="427"/>
    </location>
</feature>
<gene>
    <name evidence="1" type="primary">L1</name>
</gene>
<organismHost>
    <name type="scientific">Homo sapiens</name>
    <name type="common">Human</name>
    <dbReference type="NCBI Taxonomy" id="9606"/>
</organismHost>
<evidence type="ECO:0000255" key="1">
    <source>
        <dbReference type="HAMAP-Rule" id="MF_04002"/>
    </source>
</evidence>
<evidence type="ECO:0000256" key="2">
    <source>
        <dbReference type="SAM" id="MobiDB-lite"/>
    </source>
</evidence>
<proteinExistence type="inferred from homology"/>
<organism>
    <name type="scientific">Human papillomavirus 7</name>
    <dbReference type="NCBI Taxonomy" id="10620"/>
    <lineage>
        <taxon>Viruses</taxon>
        <taxon>Monodnaviria</taxon>
        <taxon>Shotokuvirae</taxon>
        <taxon>Cossaviricota</taxon>
        <taxon>Papovaviricetes</taxon>
        <taxon>Zurhausenvirales</taxon>
        <taxon>Papillomaviridae</taxon>
        <taxon>Firstpapillomavirinae</taxon>
        <taxon>Alphapapillomavirus</taxon>
        <taxon>Alphapapillomavirus 8</taxon>
    </lineage>
</organism>
<protein>
    <recommendedName>
        <fullName evidence="1">Major capsid protein L1</fullName>
    </recommendedName>
</protein>
<name>VL1_HPV07</name>
<sequence>MWQLNENQVYLPPPTPVATIVSTDEYVQRTSLYYHAGSTRLLTIGHPYFELKKPNGDVSVPKVSGHQYRVFRVRLPDPNKFGLSDTSLFNSETQRLVWACVGVEVGRGQPLGVGISGHPYFNKDEDVENSSVYGTVPGQDSRENVAMDYKQTQLCIVGCTPPIGEYWGMGTPCNASKVSPGDCPVLELKSEVIEDGDMVDAGFGAMDFASLQANKSDVPLDLCTSISKYPDYLGMAAEPYGNSLFFFLRREQMFVRHFFNRAGTTGDSVPNDLYITGSSNRASIAGSIYYSTPSGSLVTSDSQIFNKPLWIQKAQGHNNGICFGNQLFVTVVDTTRSTNLTLCAATQSPTPTPYDNSKFKEYLRHGEEFDLQFIFQLCVITLNAEVMTYIHAMDSSLLDDWNFKIGPPASATLEDTYRFLTNKAIACQRDAPPKEKEDPYKKYKFWEVNLTEKFSSQLDQFPLGRKFLMQAGLRTGPKFKSRKRPAPTSSSSSGSVTPKRKKTKR</sequence>
<comment type="function">
    <text evidence="1">Forms an icosahedral capsid with a T=7 symmetry and a 50 nm diameter. The capsid is composed of 72 pentamers linked to each other by disulfide bonds and associated with L2 proteins. Binds to heparan sulfate proteoglycans on cell surface of basal layer keratinocytes to provide initial virion attachment. This binding mediates a conformational change in the virus capsid that facilitates efficient infection. The virion enters the host cell via endocytosis. During virus trafficking, L1 protein dissociates from the viral DNA and the genomic DNA is released to the host nucleus. The virion assembly takes place within the cell nucleus. Encapsulates the genomic DNA together with protein L2.</text>
</comment>
<comment type="subunit">
    <text evidence="1">Self-assembles into homopentamers. The capsid has an icosahedral symmetry and consists of 72 capsomers, with each capsomer being a pentamer of L1. Interacts with the minor capsid protein L2; this interaction is necessary for viral genome encapsidation. Interacts with protein E2; this interaction enhances E2-dependent replication and transcription activation.</text>
</comment>
<comment type="subcellular location">
    <subcellularLocation>
        <location evidence="1">Virion</location>
    </subcellularLocation>
    <subcellularLocation>
        <location evidence="1">Host nucleus</location>
    </subcellularLocation>
</comment>
<comment type="similarity">
    <text evidence="1">Belongs to the papillomaviridae L1 protein family.</text>
</comment>
<reference key="1">
    <citation type="journal article" date="1994" name="Curr. Top. Microbiol. Immunol.">
        <title>Primer-directed sequencing of human papillomavirus types.</title>
        <authorList>
            <person name="Delius H."/>
            <person name="Hofmann B."/>
        </authorList>
    </citation>
    <scope>NUCLEOTIDE SEQUENCE [GENOMIC DNA]</scope>
</reference>
<reference key="2">
    <citation type="journal article" date="1992" name="J. Virol.">
        <title>Phylogenetic analysis of 48 papillomavirus types and 28 subtypes and variants: a showcase for the molecular evolution of DNA viruses.</title>
        <authorList>
            <person name="Chan S.-Y."/>
            <person name="Bernard H.U."/>
            <person name="Ong C.K."/>
            <person name="Chan S.P."/>
            <person name="Birgit H."/>
            <person name="Delius H."/>
        </authorList>
    </citation>
    <scope>NUCLEOTIDE SEQUENCE [GENOMIC DNA] OF 300-343</scope>
</reference>
<dbReference type="EMBL" id="M96293">
    <property type="protein sequence ID" value="AAA47032.1"/>
    <property type="molecule type" value="Genomic_DNA"/>
</dbReference>
<dbReference type="EMBL" id="X74463">
    <property type="protein sequence ID" value="CAA52481.1"/>
    <property type="molecule type" value="Genomic_DNA"/>
</dbReference>
<dbReference type="EMBL" id="M96300">
    <property type="protein sequence ID" value="AAA47039.1"/>
    <property type="molecule type" value="Genomic_DNA"/>
</dbReference>
<dbReference type="PIR" id="S36589">
    <property type="entry name" value="S36589"/>
</dbReference>
<dbReference type="RefSeq" id="NP_041859.1">
    <property type="nucleotide sequence ID" value="NC_001595.1"/>
</dbReference>
<dbReference type="SMR" id="Q05136"/>
<dbReference type="GeneID" id="1489474"/>
<dbReference type="KEGG" id="vg:1489474"/>
<dbReference type="OrthoDB" id="5037at10239"/>
<dbReference type="Proteomes" id="UP000008226">
    <property type="component" value="Genome"/>
</dbReference>
<dbReference type="GO" id="GO:0042025">
    <property type="term" value="C:host cell nucleus"/>
    <property type="evidence" value="ECO:0007669"/>
    <property type="project" value="UniProtKB-SubCell"/>
</dbReference>
<dbReference type="GO" id="GO:0039620">
    <property type="term" value="C:T=7 icosahedral viral capsid"/>
    <property type="evidence" value="ECO:0007669"/>
    <property type="project" value="UniProtKB-UniRule"/>
</dbReference>
<dbReference type="GO" id="GO:0005198">
    <property type="term" value="F:structural molecule activity"/>
    <property type="evidence" value="ECO:0007669"/>
    <property type="project" value="UniProtKB-UniRule"/>
</dbReference>
<dbReference type="GO" id="GO:0075509">
    <property type="term" value="P:endocytosis involved in viral entry into host cell"/>
    <property type="evidence" value="ECO:0007669"/>
    <property type="project" value="UniProtKB-KW"/>
</dbReference>
<dbReference type="GO" id="GO:0019062">
    <property type="term" value="P:virion attachment to host cell"/>
    <property type="evidence" value="ECO:0007669"/>
    <property type="project" value="UniProtKB-UniRule"/>
</dbReference>
<dbReference type="Gene3D" id="2.60.175.20">
    <property type="entry name" value="Major capsid L1 (late) superfamily, Papillomavirus"/>
    <property type="match status" value="2"/>
</dbReference>
<dbReference type="HAMAP" id="MF_04002">
    <property type="entry name" value="PPV_L1"/>
    <property type="match status" value="1"/>
</dbReference>
<dbReference type="InterPro" id="IPR002210">
    <property type="entry name" value="Capsid_L1_Papillomavir"/>
</dbReference>
<dbReference type="InterPro" id="IPR036973">
    <property type="entry name" value="Capsid_L1_sf_Papillomavir"/>
</dbReference>
<dbReference type="InterPro" id="IPR011222">
    <property type="entry name" value="dsDNA_vir_gr_I_capsid"/>
</dbReference>
<dbReference type="Pfam" id="PF00500">
    <property type="entry name" value="Late_protein_L1"/>
    <property type="match status" value="1"/>
</dbReference>
<dbReference type="PRINTS" id="PR00865">
    <property type="entry name" value="HPVCAPSIDL1"/>
</dbReference>
<dbReference type="SUPFAM" id="SSF88648">
    <property type="entry name" value="Group I dsDNA viruses"/>
    <property type="match status" value="1"/>
</dbReference>
<keyword id="KW-0167">Capsid protein</keyword>
<keyword id="KW-1015">Disulfide bond</keyword>
<keyword id="KW-1048">Host nucleus</keyword>
<keyword id="KW-0945">Host-virus interaction</keyword>
<keyword id="KW-0426">Late protein</keyword>
<keyword id="KW-1185">Reference proteome</keyword>
<keyword id="KW-1145">T=7 icosahedral capsid protein</keyword>
<keyword id="KW-1161">Viral attachment to host cell</keyword>
<keyword id="KW-1162">Viral penetration into host cytoplasm</keyword>
<keyword id="KW-0946">Virion</keyword>
<keyword id="KW-1164">Virus endocytosis by host</keyword>
<keyword id="KW-1160">Virus entry into host cell</keyword>
<accession>Q05136</accession>